<evidence type="ECO:0000250" key="1"/>
<evidence type="ECO:0000305" key="2"/>
<name>MED27_XENTR</name>
<protein>
    <recommendedName>
        <fullName>Mediator of RNA polymerase II transcription subunit 27</fullName>
    </recommendedName>
    <alternativeName>
        <fullName>Cofactor required for Sp1 transcriptional activation subunit 8</fullName>
        <shortName>CRSP complex subunit 8</shortName>
    </alternativeName>
    <alternativeName>
        <fullName>Mediator complex subunit 27</fullName>
    </alternativeName>
</protein>
<accession>Q5XHA1</accession>
<feature type="chain" id="PRO_0000305015" description="Mediator of RNA polymerase II transcription subunit 27">
    <location>
        <begin position="1"/>
        <end position="311"/>
    </location>
</feature>
<gene>
    <name type="primary">med27</name>
    <name type="synonym">crsp8</name>
</gene>
<comment type="function">
    <text evidence="1">Component of the Mediator complex, a coactivator involved in the regulated transcription of nearly all RNA polymerase II-dependent genes. Mediator functions as a bridge to convey information from gene-specific regulatory proteins to the basal RNA polymerase II transcription machinery. Mediator is recruited to promoters by direct interactions with regulatory proteins and serves as a scaffold for the assembly of a functional preinitiation complex with RNA polymerase II and the general transcription factors (By similarity).</text>
</comment>
<comment type="subunit">
    <text evidence="1">Component of the Mediator complex.</text>
</comment>
<comment type="subcellular location">
    <subcellularLocation>
        <location evidence="1">Nucleus</location>
    </subcellularLocation>
</comment>
<comment type="similarity">
    <text evidence="2">Belongs to the Mediator complex subunit 27 family.</text>
</comment>
<dbReference type="EMBL" id="BC084171">
    <property type="protein sequence ID" value="AAH84171.1"/>
    <property type="molecule type" value="mRNA"/>
</dbReference>
<dbReference type="RefSeq" id="NP_001011132.1">
    <property type="nucleotide sequence ID" value="NM_001011132.1"/>
</dbReference>
<dbReference type="RefSeq" id="XP_017952199.1">
    <property type="nucleotide sequence ID" value="XM_018096710.2"/>
</dbReference>
<dbReference type="SMR" id="Q5XHA1"/>
<dbReference type="FunCoup" id="Q5XHA1">
    <property type="interactions" value="3240"/>
</dbReference>
<dbReference type="STRING" id="8364.ENSXETP00000030650"/>
<dbReference type="PaxDb" id="8364-ENSXETP00000003112"/>
<dbReference type="DNASU" id="101731143"/>
<dbReference type="GeneID" id="101731143"/>
<dbReference type="KEGG" id="xtr:101731143"/>
<dbReference type="AGR" id="Xenbase:XB-GENE-6054175"/>
<dbReference type="CTD" id="9442"/>
<dbReference type="Xenbase" id="XB-GENE-6054175">
    <property type="gene designation" value="med27"/>
</dbReference>
<dbReference type="eggNOG" id="ENOG502QS6H">
    <property type="taxonomic scope" value="Eukaryota"/>
</dbReference>
<dbReference type="HOGENOM" id="CLU_1735744_0_0_1"/>
<dbReference type="InParanoid" id="Q5XHA1"/>
<dbReference type="OMA" id="FHEDCRN"/>
<dbReference type="OrthoDB" id="1868004at2759"/>
<dbReference type="Proteomes" id="UP000008143">
    <property type="component" value="Chromosome 8"/>
</dbReference>
<dbReference type="Bgee" id="ENSXETG00000001486">
    <property type="expression patterns" value="Expressed in gastrula and 12 other cell types or tissues"/>
</dbReference>
<dbReference type="ExpressionAtlas" id="Q5XHA1">
    <property type="expression patterns" value="baseline"/>
</dbReference>
<dbReference type="GO" id="GO:0016592">
    <property type="term" value="C:mediator complex"/>
    <property type="evidence" value="ECO:0007669"/>
    <property type="project" value="InterPro"/>
</dbReference>
<dbReference type="InterPro" id="IPR021627">
    <property type="entry name" value="Mediator_Med27"/>
</dbReference>
<dbReference type="PANTHER" id="PTHR13130">
    <property type="entry name" value="34 KDA TRANSCRIPTIONAL CO-ACTIVATOR-RELATED"/>
    <property type="match status" value="1"/>
</dbReference>
<dbReference type="PANTHER" id="PTHR13130:SF4">
    <property type="entry name" value="MEDIATOR OF RNA POLYMERASE II TRANSCRIPTION SUBUNIT 27"/>
    <property type="match status" value="1"/>
</dbReference>
<dbReference type="Pfam" id="PF11571">
    <property type="entry name" value="Med27"/>
    <property type="match status" value="1"/>
</dbReference>
<keyword id="KW-0010">Activator</keyword>
<keyword id="KW-0539">Nucleus</keyword>
<keyword id="KW-1185">Reference proteome</keyword>
<keyword id="KW-0804">Transcription</keyword>
<keyword id="KW-0805">Transcription regulation</keyword>
<sequence length="311" mass="35479">MADALNVGVNLEAFSQAIHCIQALRSSVTRVFDCLKDGMKNKESQEARERAFVSEFQDNLHCVNRDLNELERLSNLVGKPSENHPLHNSGLLSLDPVHDKTPLYSQLLQAYKWSNKLQFHAGLASGLLNQQSLKRSANQMGVSAKRRPKVQPTTLALPPQYIDDVISRIDRMFPEMTIQLSRPNGSSAMLLVTLGKVLKVIVVMRSLFIDRTIVKGYNENVYTEDGKLDIWSKSNYQVFQKVTDHATTALLHYQLPQMPDVVVRSFMTWLRSYIKLFQAPCQRCGKFLQDGLPPTWRDFRTLEAFHDSCRQ</sequence>
<proteinExistence type="evidence at transcript level"/>
<reference key="1">
    <citation type="submission" date="2004-10" db="EMBL/GenBank/DDBJ databases">
        <authorList>
            <consortium name="NIH - Xenopus Gene Collection (XGC) project"/>
        </authorList>
    </citation>
    <scope>NUCLEOTIDE SEQUENCE [LARGE SCALE MRNA]</scope>
    <source>
        <tissue>Embryo</tissue>
    </source>
</reference>
<organism>
    <name type="scientific">Xenopus tropicalis</name>
    <name type="common">Western clawed frog</name>
    <name type="synonym">Silurana tropicalis</name>
    <dbReference type="NCBI Taxonomy" id="8364"/>
    <lineage>
        <taxon>Eukaryota</taxon>
        <taxon>Metazoa</taxon>
        <taxon>Chordata</taxon>
        <taxon>Craniata</taxon>
        <taxon>Vertebrata</taxon>
        <taxon>Euteleostomi</taxon>
        <taxon>Amphibia</taxon>
        <taxon>Batrachia</taxon>
        <taxon>Anura</taxon>
        <taxon>Pipoidea</taxon>
        <taxon>Pipidae</taxon>
        <taxon>Xenopodinae</taxon>
        <taxon>Xenopus</taxon>
        <taxon>Silurana</taxon>
    </lineage>
</organism>